<comment type="function">
    <text evidence="1 2">An RNase that has 5'-3' exonuclease and possibly endonuclease activity. Involved in maturation of rRNA and in some organisms also mRNA maturation and/or decay (By similarity). Has an overlapping but not completely redundant role with RNase J1 in the decay of mRNA.</text>
</comment>
<comment type="cofactor">
    <cofactor evidence="1">
        <name>Zn(2+)</name>
        <dbReference type="ChEBI" id="CHEBI:29105"/>
    </cofactor>
    <text evidence="1">Binds 1 Zn(2+) ion per subunit. It is not clear if Zn(2+) or Mg(2+) is physiologically important.</text>
</comment>
<comment type="subunit">
    <text evidence="1">Homodimer, may be a subunit of the RNA degradosome.</text>
</comment>
<comment type="subcellular location">
    <subcellularLocation>
        <location evidence="1">Cytoplasm</location>
    </subcellularLocation>
</comment>
<comment type="induction">
    <text evidence="2">Expressed in cells (at protein level). Part of an operon including SpyM3_0658 and probably SpyM3_0659.</text>
</comment>
<comment type="disruption phenotype">
    <text evidence="2">Essential, it cannot be disrupted. Depletion experiments show is involved in decay of Class I mRNAs (they decay rapidly in exponential phase, are difficult to detect in stationary phase). Involved in an early stage of degradation of Class II mRNAs (more abundant in stationary than exponential phase, show biphasic decay kinetics).</text>
</comment>
<comment type="similarity">
    <text evidence="1">Belongs to the metallo-beta-lactamase superfamily. RNA-metabolizing metallo-beta-lactamase-like family. Bacterial RNase J subfamily.</text>
</comment>
<keyword id="KW-0963">Cytoplasm</keyword>
<keyword id="KW-0255">Endonuclease</keyword>
<keyword id="KW-0269">Exonuclease</keyword>
<keyword id="KW-0378">Hydrolase</keyword>
<keyword id="KW-0479">Metal-binding</keyword>
<keyword id="KW-0507">mRNA processing</keyword>
<keyword id="KW-0540">Nuclease</keyword>
<keyword id="KW-0694">RNA-binding</keyword>
<keyword id="KW-0698">rRNA processing</keyword>
<keyword id="KW-0862">Zinc</keyword>
<sequence>MTDIKMIALGGVREYGKNFYLVEINDSMFILDAGLKYPENEQLGVDLVIPNLDYVIENKGKVQGIFLSHGHADAIGALPYLLAEVSAPVFGSELTIELAKLFVKSNNSTKKFNNFHVVDSDTEIEFKDGLVSFFRTTHSIPESMGIVIGTDKGNIVYTGDFKFDQAAREGYQTDLLRLAEIGKEGVLALLSDSVNATSNDQIASESEVGEEMDSVISDADGRVIVAAVASNLVRIQQVFDSATAHGRRVVLTGTDAENIVRTALRLEKLMITDERLLIKPKDMSKFEDHELIILEAGRMGEPINSLQKMAAGRHRYVQIKEGDLVYIVTTPSTAKEAMVARVENLIYKAGGSVKLITQNLRVSGHANGRDLQLLMNLLKPQYLFPVQGEYRDLAAHAKLAEEVGIFPENIHILKRGDIMVLNDEGFLHEGGVPASDVMIDGNAIGDVGNIVLRDRKVLSEDGIFIVAITVSKKEKRIISKAKVNTRGFVYVKKSHDILRESAELVNTTVGNYLKKDTFDWGELKGNVRDDLSKFLFEQTKRRPAILPVVMEVR</sequence>
<protein>
    <recommendedName>
        <fullName evidence="1">Ribonuclease J 2</fullName>
        <shortName evidence="1">RNase J 2</shortName>
        <ecNumber evidence="1">3.1.-.-</ecNumber>
    </recommendedName>
</protein>
<dbReference type="EC" id="3.1.-.-" evidence="1"/>
<dbReference type="EMBL" id="AE014074">
    <property type="protein sequence ID" value="AAM79264.1"/>
    <property type="molecule type" value="Genomic_DNA"/>
</dbReference>
<dbReference type="RefSeq" id="WP_002984872.1">
    <property type="nucleotide sequence ID" value="NC_004070.1"/>
</dbReference>
<dbReference type="SMR" id="Q8K7S6"/>
<dbReference type="KEGG" id="spg:SpyM3_0657"/>
<dbReference type="HOGENOM" id="CLU_008727_3_1_9"/>
<dbReference type="BRENDA" id="4.6.1.22">
    <property type="organism ID" value="5935"/>
</dbReference>
<dbReference type="Proteomes" id="UP000000564">
    <property type="component" value="Chromosome"/>
</dbReference>
<dbReference type="GO" id="GO:0005737">
    <property type="term" value="C:cytoplasm"/>
    <property type="evidence" value="ECO:0007669"/>
    <property type="project" value="UniProtKB-SubCell"/>
</dbReference>
<dbReference type="GO" id="GO:0004534">
    <property type="term" value="F:5'-3' RNA exonuclease activity"/>
    <property type="evidence" value="ECO:0007669"/>
    <property type="project" value="UniProtKB-UniRule"/>
</dbReference>
<dbReference type="GO" id="GO:0003723">
    <property type="term" value="F:RNA binding"/>
    <property type="evidence" value="ECO:0007669"/>
    <property type="project" value="UniProtKB-UniRule"/>
</dbReference>
<dbReference type="GO" id="GO:0004521">
    <property type="term" value="F:RNA endonuclease activity"/>
    <property type="evidence" value="ECO:0007669"/>
    <property type="project" value="UniProtKB-UniRule"/>
</dbReference>
<dbReference type="GO" id="GO:0008270">
    <property type="term" value="F:zinc ion binding"/>
    <property type="evidence" value="ECO:0007669"/>
    <property type="project" value="InterPro"/>
</dbReference>
<dbReference type="GO" id="GO:0006397">
    <property type="term" value="P:mRNA processing"/>
    <property type="evidence" value="ECO:0007669"/>
    <property type="project" value="UniProtKB-KW"/>
</dbReference>
<dbReference type="GO" id="GO:0006364">
    <property type="term" value="P:rRNA processing"/>
    <property type="evidence" value="ECO:0007669"/>
    <property type="project" value="UniProtKB-UniRule"/>
</dbReference>
<dbReference type="CDD" id="cd07714">
    <property type="entry name" value="RNaseJ_MBL-fold"/>
    <property type="match status" value="1"/>
</dbReference>
<dbReference type="FunFam" id="3.10.20.580:FF:000001">
    <property type="entry name" value="Ribonuclease J"/>
    <property type="match status" value="1"/>
</dbReference>
<dbReference type="Gene3D" id="3.10.20.580">
    <property type="match status" value="1"/>
</dbReference>
<dbReference type="Gene3D" id="3.40.50.10710">
    <property type="entry name" value="Metallo-hydrolase/oxidoreductase"/>
    <property type="match status" value="1"/>
</dbReference>
<dbReference type="Gene3D" id="3.60.15.10">
    <property type="entry name" value="Ribonuclease Z/Hydroxyacylglutathione hydrolase-like"/>
    <property type="match status" value="1"/>
</dbReference>
<dbReference type="HAMAP" id="MF_01491">
    <property type="entry name" value="RNase_J_bact"/>
    <property type="match status" value="1"/>
</dbReference>
<dbReference type="InterPro" id="IPR001279">
    <property type="entry name" value="Metallo-B-lactamas"/>
</dbReference>
<dbReference type="InterPro" id="IPR036866">
    <property type="entry name" value="RibonucZ/Hydroxyglut_hydro"/>
</dbReference>
<dbReference type="InterPro" id="IPR011108">
    <property type="entry name" value="RMMBL"/>
</dbReference>
<dbReference type="InterPro" id="IPR004613">
    <property type="entry name" value="RNase_J"/>
</dbReference>
<dbReference type="InterPro" id="IPR042173">
    <property type="entry name" value="RNase_J_2"/>
</dbReference>
<dbReference type="InterPro" id="IPR055132">
    <property type="entry name" value="RNase_J_b_CASP"/>
</dbReference>
<dbReference type="InterPro" id="IPR030854">
    <property type="entry name" value="RNase_J_bac"/>
</dbReference>
<dbReference type="InterPro" id="IPR041636">
    <property type="entry name" value="RNase_J_C"/>
</dbReference>
<dbReference type="NCBIfam" id="TIGR00649">
    <property type="entry name" value="MG423"/>
    <property type="match status" value="1"/>
</dbReference>
<dbReference type="PANTHER" id="PTHR43694">
    <property type="entry name" value="RIBONUCLEASE J"/>
    <property type="match status" value="1"/>
</dbReference>
<dbReference type="PANTHER" id="PTHR43694:SF4">
    <property type="entry name" value="RIBONUCLEASE J 2"/>
    <property type="match status" value="1"/>
</dbReference>
<dbReference type="Pfam" id="PF00753">
    <property type="entry name" value="Lactamase_B"/>
    <property type="match status" value="1"/>
</dbReference>
<dbReference type="Pfam" id="PF07521">
    <property type="entry name" value="RMMBL"/>
    <property type="match status" value="1"/>
</dbReference>
<dbReference type="Pfam" id="PF22505">
    <property type="entry name" value="RNase_J_b_CASP"/>
    <property type="match status" value="1"/>
</dbReference>
<dbReference type="Pfam" id="PF17770">
    <property type="entry name" value="RNase_J_C"/>
    <property type="match status" value="1"/>
</dbReference>
<dbReference type="SMART" id="SM00849">
    <property type="entry name" value="Lactamase_B"/>
    <property type="match status" value="1"/>
</dbReference>
<dbReference type="SUPFAM" id="SSF56281">
    <property type="entry name" value="Metallo-hydrolase/oxidoreductase"/>
    <property type="match status" value="1"/>
</dbReference>
<gene>
    <name evidence="1" type="primary">rnj2</name>
    <name type="ordered locus">SpyM3_0657</name>
</gene>
<reference key="1">
    <citation type="journal article" date="2002" name="Proc. Natl. Acad. Sci. U.S.A.">
        <title>Genome sequence of a serotype M3 strain of group A Streptococcus: phage-encoded toxins, the high-virulence phenotype, and clone emergence.</title>
        <authorList>
            <person name="Beres S.B."/>
            <person name="Sylva G.L."/>
            <person name="Barbian K.D."/>
            <person name="Lei B."/>
            <person name="Hoff J.S."/>
            <person name="Mammarella N.D."/>
            <person name="Liu M.-Y."/>
            <person name="Smoot J.C."/>
            <person name="Porcella S.F."/>
            <person name="Parkins L.D."/>
            <person name="Campbell D.S."/>
            <person name="Smith T.M."/>
            <person name="McCormick J.K."/>
            <person name="Leung D.Y.M."/>
            <person name="Schlievert P.M."/>
            <person name="Musser J.M."/>
        </authorList>
    </citation>
    <scope>NUCLEOTIDE SEQUENCE [LARGE SCALE GENOMIC DNA]</scope>
    <source>
        <strain>ATCC BAA-595 / MGAS315</strain>
    </source>
</reference>
<reference key="2">
    <citation type="journal article" date="2010" name="Mol. Microbiol.">
        <title>The ribonucleases J1 and J2 are essential for growth and have independent roles in mRNA decay in Streptococcus pyogenes.</title>
        <authorList>
            <person name="Bugrysheva J.V."/>
            <person name="Scott J.R."/>
        </authorList>
    </citation>
    <scope>FUNCTION</scope>
    <scope>INDUCTION</scope>
    <scope>OPERON STRUCTURE</scope>
    <scope>DISRUPTION PHENOTYPE</scope>
    <source>
        <strain>ATCC BAA-595 / MGAS315</strain>
    </source>
</reference>
<feature type="chain" id="PRO_0000429574" description="Ribonuclease J 2">
    <location>
        <begin position="1"/>
        <end position="553"/>
    </location>
</feature>
<feature type="binding site" evidence="1">
    <location>
        <position position="69"/>
    </location>
    <ligand>
        <name>Zn(2+)</name>
        <dbReference type="ChEBI" id="CHEBI:29105"/>
        <note>catalytic</note>
    </ligand>
</feature>
<feature type="binding site" evidence="1">
    <location>
        <position position="71"/>
    </location>
    <ligand>
        <name>Zn(2+)</name>
        <dbReference type="ChEBI" id="CHEBI:29105"/>
        <note>catalytic</note>
    </ligand>
</feature>
<feature type="binding site" evidence="1">
    <location>
        <position position="138"/>
    </location>
    <ligand>
        <name>Zn(2+)</name>
        <dbReference type="ChEBI" id="CHEBI:29105"/>
        <note>catalytic</note>
    </ligand>
</feature>
<feature type="binding site" evidence="1">
    <location>
        <position position="160"/>
    </location>
    <ligand>
        <name>Zn(2+)</name>
        <dbReference type="ChEBI" id="CHEBI:29105"/>
        <note>catalytic</note>
    </ligand>
</feature>
<feature type="binding site" evidence="1">
    <location>
        <begin position="361"/>
        <end position="365"/>
    </location>
    <ligand>
        <name>substrate</name>
    </ligand>
</feature>
<proteinExistence type="evidence at protein level"/>
<organism>
    <name type="scientific">Streptococcus pyogenes serotype M3 (strain ATCC BAA-595 / MGAS315)</name>
    <dbReference type="NCBI Taxonomy" id="198466"/>
    <lineage>
        <taxon>Bacteria</taxon>
        <taxon>Bacillati</taxon>
        <taxon>Bacillota</taxon>
        <taxon>Bacilli</taxon>
        <taxon>Lactobacillales</taxon>
        <taxon>Streptococcaceae</taxon>
        <taxon>Streptococcus</taxon>
    </lineage>
</organism>
<accession>Q8K7S6</accession>
<accession>Q79WZ3</accession>
<evidence type="ECO:0000255" key="1">
    <source>
        <dbReference type="HAMAP-Rule" id="MF_01491"/>
    </source>
</evidence>
<evidence type="ECO:0000269" key="2">
    <source>
    </source>
</evidence>
<name>RNJ2_STRP3</name>